<protein>
    <recommendedName>
        <fullName evidence="1">tRNA N6-adenosine threonylcarbamoyltransferase</fullName>
        <ecNumber evidence="1">2.3.1.234</ecNumber>
    </recommendedName>
    <alternativeName>
        <fullName evidence="1">N6-L-threonylcarbamoyladenine synthase</fullName>
        <shortName evidence="1">t(6)A synthase</shortName>
    </alternativeName>
    <alternativeName>
        <fullName evidence="1">t(6)A37 threonylcarbamoyladenosine biosynthesis protein TsaD</fullName>
    </alternativeName>
    <alternativeName>
        <fullName evidence="1">tRNA threonylcarbamoyladenosine biosynthesis protein TsaD</fullName>
    </alternativeName>
</protein>
<name>TSAD_DINSH</name>
<evidence type="ECO:0000255" key="1">
    <source>
        <dbReference type="HAMAP-Rule" id="MF_01445"/>
    </source>
</evidence>
<evidence type="ECO:0000256" key="2">
    <source>
        <dbReference type="SAM" id="MobiDB-lite"/>
    </source>
</evidence>
<feature type="chain" id="PRO_1000087473" description="tRNA N6-adenosine threonylcarbamoyltransferase">
    <location>
        <begin position="1"/>
        <end position="356"/>
    </location>
</feature>
<feature type="region of interest" description="Disordered" evidence="2">
    <location>
        <begin position="333"/>
        <end position="356"/>
    </location>
</feature>
<feature type="binding site" evidence="1">
    <location>
        <position position="114"/>
    </location>
    <ligand>
        <name>Fe cation</name>
        <dbReference type="ChEBI" id="CHEBI:24875"/>
    </ligand>
</feature>
<feature type="binding site" evidence="1">
    <location>
        <position position="118"/>
    </location>
    <ligand>
        <name>Fe cation</name>
        <dbReference type="ChEBI" id="CHEBI:24875"/>
    </ligand>
</feature>
<feature type="binding site" evidence="1">
    <location>
        <begin position="136"/>
        <end position="140"/>
    </location>
    <ligand>
        <name>substrate</name>
    </ligand>
</feature>
<feature type="binding site" evidence="1">
    <location>
        <position position="169"/>
    </location>
    <ligand>
        <name>substrate</name>
    </ligand>
</feature>
<feature type="binding site" evidence="1">
    <location>
        <position position="182"/>
    </location>
    <ligand>
        <name>substrate</name>
    </ligand>
</feature>
<feature type="binding site" evidence="1">
    <location>
        <position position="280"/>
    </location>
    <ligand>
        <name>substrate</name>
    </ligand>
</feature>
<feature type="binding site" evidence="1">
    <location>
        <position position="308"/>
    </location>
    <ligand>
        <name>Fe cation</name>
        <dbReference type="ChEBI" id="CHEBI:24875"/>
    </ligand>
</feature>
<proteinExistence type="inferred from homology"/>
<keyword id="KW-0012">Acyltransferase</keyword>
<keyword id="KW-0963">Cytoplasm</keyword>
<keyword id="KW-0408">Iron</keyword>
<keyword id="KW-0479">Metal-binding</keyword>
<keyword id="KW-1185">Reference proteome</keyword>
<keyword id="KW-0808">Transferase</keyword>
<keyword id="KW-0819">tRNA processing</keyword>
<sequence length="356" mass="36174">MTPSLTVLGIESSCDDTAAAVLRGPEVLSSVVYGQTALHAAFGGVVPELAARAHVEKLDIAVAAALSEAVLALDQIDVIAVTAGPGLIGGVLSGVMLAKGLSAASGVPLIGVNHLAGHALTPRFTDGLAFPYLMLLVSGGHCQFLRVEGPEAFHRLGGTIDDAPGEAFDKTAKLLGLPQPGGPAVEAEARAGDPARFVFPRPLLDRAGCDMSFSGLKTALLRARDGLVSAGGGLTAQDRADLCAGFQAAICDVLVEKSRRALTQSEGVTGFAVAGGVAANEQVRSGLARLAAELDAPFVAPPLRYCTDNAAMIAWAGQEAFSAGARSGLDLSARPRWPLDNSQPALLGSGKKGAKA</sequence>
<dbReference type="EC" id="2.3.1.234" evidence="1"/>
<dbReference type="EMBL" id="CP000830">
    <property type="protein sequence ID" value="ABV95148.1"/>
    <property type="molecule type" value="Genomic_DNA"/>
</dbReference>
<dbReference type="RefSeq" id="WP_012180072.1">
    <property type="nucleotide sequence ID" value="NC_009952.1"/>
</dbReference>
<dbReference type="SMR" id="A8LP83"/>
<dbReference type="STRING" id="398580.Dshi_3415"/>
<dbReference type="KEGG" id="dsh:Dshi_3415"/>
<dbReference type="eggNOG" id="COG0533">
    <property type="taxonomic scope" value="Bacteria"/>
</dbReference>
<dbReference type="HOGENOM" id="CLU_023208_0_2_5"/>
<dbReference type="OrthoDB" id="9806197at2"/>
<dbReference type="Proteomes" id="UP000006833">
    <property type="component" value="Chromosome"/>
</dbReference>
<dbReference type="GO" id="GO:0005737">
    <property type="term" value="C:cytoplasm"/>
    <property type="evidence" value="ECO:0007669"/>
    <property type="project" value="UniProtKB-SubCell"/>
</dbReference>
<dbReference type="GO" id="GO:0005506">
    <property type="term" value="F:iron ion binding"/>
    <property type="evidence" value="ECO:0007669"/>
    <property type="project" value="UniProtKB-UniRule"/>
</dbReference>
<dbReference type="GO" id="GO:0061711">
    <property type="term" value="F:N(6)-L-threonylcarbamoyladenine synthase activity"/>
    <property type="evidence" value="ECO:0007669"/>
    <property type="project" value="UniProtKB-EC"/>
</dbReference>
<dbReference type="GO" id="GO:0002949">
    <property type="term" value="P:tRNA threonylcarbamoyladenosine modification"/>
    <property type="evidence" value="ECO:0007669"/>
    <property type="project" value="UniProtKB-UniRule"/>
</dbReference>
<dbReference type="CDD" id="cd24133">
    <property type="entry name" value="ASKHA_NBD_TsaD_bac"/>
    <property type="match status" value="1"/>
</dbReference>
<dbReference type="FunFam" id="3.30.420.40:FF:000012">
    <property type="entry name" value="tRNA N6-adenosine threonylcarbamoyltransferase"/>
    <property type="match status" value="1"/>
</dbReference>
<dbReference type="Gene3D" id="3.30.420.40">
    <property type="match status" value="2"/>
</dbReference>
<dbReference type="HAMAP" id="MF_01445">
    <property type="entry name" value="TsaD"/>
    <property type="match status" value="1"/>
</dbReference>
<dbReference type="InterPro" id="IPR043129">
    <property type="entry name" value="ATPase_NBD"/>
</dbReference>
<dbReference type="InterPro" id="IPR000905">
    <property type="entry name" value="Gcp-like_dom"/>
</dbReference>
<dbReference type="InterPro" id="IPR017861">
    <property type="entry name" value="KAE1/TsaD"/>
</dbReference>
<dbReference type="InterPro" id="IPR022450">
    <property type="entry name" value="TsaD"/>
</dbReference>
<dbReference type="NCBIfam" id="TIGR00329">
    <property type="entry name" value="gcp_kae1"/>
    <property type="match status" value="1"/>
</dbReference>
<dbReference type="NCBIfam" id="TIGR03723">
    <property type="entry name" value="T6A_TsaD_YgjD"/>
    <property type="match status" value="1"/>
</dbReference>
<dbReference type="PANTHER" id="PTHR11735">
    <property type="entry name" value="TRNA N6-ADENOSINE THREONYLCARBAMOYLTRANSFERASE"/>
    <property type="match status" value="1"/>
</dbReference>
<dbReference type="PANTHER" id="PTHR11735:SF6">
    <property type="entry name" value="TRNA N6-ADENOSINE THREONYLCARBAMOYLTRANSFERASE, MITOCHONDRIAL"/>
    <property type="match status" value="1"/>
</dbReference>
<dbReference type="Pfam" id="PF00814">
    <property type="entry name" value="TsaD"/>
    <property type="match status" value="1"/>
</dbReference>
<dbReference type="PRINTS" id="PR00789">
    <property type="entry name" value="OSIALOPTASE"/>
</dbReference>
<dbReference type="SUPFAM" id="SSF53067">
    <property type="entry name" value="Actin-like ATPase domain"/>
    <property type="match status" value="2"/>
</dbReference>
<organism>
    <name type="scientific">Dinoroseobacter shibae (strain DSM 16493 / NCIMB 14021 / DFL 12)</name>
    <dbReference type="NCBI Taxonomy" id="398580"/>
    <lineage>
        <taxon>Bacteria</taxon>
        <taxon>Pseudomonadati</taxon>
        <taxon>Pseudomonadota</taxon>
        <taxon>Alphaproteobacteria</taxon>
        <taxon>Rhodobacterales</taxon>
        <taxon>Roseobacteraceae</taxon>
        <taxon>Dinoroseobacter</taxon>
    </lineage>
</organism>
<comment type="function">
    <text evidence="1">Required for the formation of a threonylcarbamoyl group on adenosine at position 37 (t(6)A37) in tRNAs that read codons beginning with adenine. Is involved in the transfer of the threonylcarbamoyl moiety of threonylcarbamoyl-AMP (TC-AMP) to the N6 group of A37, together with TsaE and TsaB. TsaD likely plays a direct catalytic role in this reaction.</text>
</comment>
<comment type="catalytic activity">
    <reaction evidence="1">
        <text>L-threonylcarbamoyladenylate + adenosine(37) in tRNA = N(6)-L-threonylcarbamoyladenosine(37) in tRNA + AMP + H(+)</text>
        <dbReference type="Rhea" id="RHEA:37059"/>
        <dbReference type="Rhea" id="RHEA-COMP:10162"/>
        <dbReference type="Rhea" id="RHEA-COMP:10163"/>
        <dbReference type="ChEBI" id="CHEBI:15378"/>
        <dbReference type="ChEBI" id="CHEBI:73682"/>
        <dbReference type="ChEBI" id="CHEBI:74411"/>
        <dbReference type="ChEBI" id="CHEBI:74418"/>
        <dbReference type="ChEBI" id="CHEBI:456215"/>
        <dbReference type="EC" id="2.3.1.234"/>
    </reaction>
</comment>
<comment type="cofactor">
    <cofactor evidence="1">
        <name>Fe(2+)</name>
        <dbReference type="ChEBI" id="CHEBI:29033"/>
    </cofactor>
    <text evidence="1">Binds 1 Fe(2+) ion per subunit.</text>
</comment>
<comment type="subcellular location">
    <subcellularLocation>
        <location evidence="1">Cytoplasm</location>
    </subcellularLocation>
</comment>
<comment type="similarity">
    <text evidence="1">Belongs to the KAE1 / TsaD family.</text>
</comment>
<reference key="1">
    <citation type="journal article" date="2010" name="ISME J.">
        <title>The complete genome sequence of the algal symbiont Dinoroseobacter shibae: a hitchhiker's guide to life in the sea.</title>
        <authorList>
            <person name="Wagner-Dobler I."/>
            <person name="Ballhausen B."/>
            <person name="Berger M."/>
            <person name="Brinkhoff T."/>
            <person name="Buchholz I."/>
            <person name="Bunk B."/>
            <person name="Cypionka H."/>
            <person name="Daniel R."/>
            <person name="Drepper T."/>
            <person name="Gerdts G."/>
            <person name="Hahnke S."/>
            <person name="Han C."/>
            <person name="Jahn D."/>
            <person name="Kalhoefer D."/>
            <person name="Kiss H."/>
            <person name="Klenk H.P."/>
            <person name="Kyrpides N."/>
            <person name="Liebl W."/>
            <person name="Liesegang H."/>
            <person name="Meincke L."/>
            <person name="Pati A."/>
            <person name="Petersen J."/>
            <person name="Piekarski T."/>
            <person name="Pommerenke C."/>
            <person name="Pradella S."/>
            <person name="Pukall R."/>
            <person name="Rabus R."/>
            <person name="Stackebrandt E."/>
            <person name="Thole S."/>
            <person name="Thompson L."/>
            <person name="Tielen P."/>
            <person name="Tomasch J."/>
            <person name="von Jan M."/>
            <person name="Wanphrut N."/>
            <person name="Wichels A."/>
            <person name="Zech H."/>
            <person name="Simon M."/>
        </authorList>
    </citation>
    <scope>NUCLEOTIDE SEQUENCE [LARGE SCALE GENOMIC DNA]</scope>
    <source>
        <strain>DSM 16493 / NCIMB 14021 / DFL 12</strain>
    </source>
</reference>
<accession>A8LP83</accession>
<gene>
    <name evidence="1" type="primary">tsaD</name>
    <name type="synonym">gcp</name>
    <name type="ordered locus">Dshi_3415</name>
</gene>